<reference key="1">
    <citation type="journal article" date="2008" name="J. Bacteriol.">
        <title>The pangenome structure of Escherichia coli: comparative genomic analysis of E. coli commensal and pathogenic isolates.</title>
        <authorList>
            <person name="Rasko D.A."/>
            <person name="Rosovitz M.J."/>
            <person name="Myers G.S.A."/>
            <person name="Mongodin E.F."/>
            <person name="Fricke W.F."/>
            <person name="Gajer P."/>
            <person name="Crabtree J."/>
            <person name="Sebaihia M."/>
            <person name="Thomson N.R."/>
            <person name="Chaudhuri R."/>
            <person name="Henderson I.R."/>
            <person name="Sperandio V."/>
            <person name="Ravel J."/>
        </authorList>
    </citation>
    <scope>NUCLEOTIDE SEQUENCE [LARGE SCALE GENOMIC DNA]</scope>
    <source>
        <strain>HS</strain>
    </source>
</reference>
<comment type="similarity">
    <text evidence="1">Belongs to the SlyX family.</text>
</comment>
<sequence length="72" mass="8214">MQDLSLEARLAELESRLAFQEITIEELNVTVTAHEMEMAKLRDHLRLLTEKLKASQPSNIASQAEETPPPHY</sequence>
<accession>A8A5F5</accession>
<protein>
    <recommendedName>
        <fullName evidence="1">Protein SlyX</fullName>
    </recommendedName>
</protein>
<organism>
    <name type="scientific">Escherichia coli O9:H4 (strain HS)</name>
    <dbReference type="NCBI Taxonomy" id="331112"/>
    <lineage>
        <taxon>Bacteria</taxon>
        <taxon>Pseudomonadati</taxon>
        <taxon>Pseudomonadota</taxon>
        <taxon>Gammaproteobacteria</taxon>
        <taxon>Enterobacterales</taxon>
        <taxon>Enterobacteriaceae</taxon>
        <taxon>Escherichia</taxon>
    </lineage>
</organism>
<name>SLYX_ECOHS</name>
<gene>
    <name evidence="1" type="primary">slyX</name>
    <name type="ordered locus">EcHS_A3544</name>
</gene>
<proteinExistence type="inferred from homology"/>
<feature type="chain" id="PRO_1000062083" description="Protein SlyX">
    <location>
        <begin position="1"/>
        <end position="72"/>
    </location>
</feature>
<feature type="region of interest" description="Disordered" evidence="2">
    <location>
        <begin position="52"/>
        <end position="72"/>
    </location>
</feature>
<feature type="compositionally biased region" description="Polar residues" evidence="2">
    <location>
        <begin position="55"/>
        <end position="65"/>
    </location>
</feature>
<dbReference type="EMBL" id="CP000802">
    <property type="protein sequence ID" value="ABV07759.1"/>
    <property type="molecule type" value="Genomic_DNA"/>
</dbReference>
<dbReference type="RefSeq" id="WP_001153615.1">
    <property type="nucleotide sequence ID" value="NC_009800.1"/>
</dbReference>
<dbReference type="SMR" id="A8A5F5"/>
<dbReference type="KEGG" id="ecx:EcHS_A3544"/>
<dbReference type="HOGENOM" id="CLU_180796_4_2_6"/>
<dbReference type="Gene3D" id="1.20.5.300">
    <property type="match status" value="1"/>
</dbReference>
<dbReference type="HAMAP" id="MF_00715">
    <property type="entry name" value="SlyX"/>
    <property type="match status" value="1"/>
</dbReference>
<dbReference type="InterPro" id="IPR007236">
    <property type="entry name" value="SlyX"/>
</dbReference>
<dbReference type="NCBIfam" id="NF002750">
    <property type="entry name" value="PRK02793.1"/>
    <property type="match status" value="1"/>
</dbReference>
<dbReference type="PANTHER" id="PTHR36508">
    <property type="entry name" value="PROTEIN SLYX"/>
    <property type="match status" value="1"/>
</dbReference>
<dbReference type="PANTHER" id="PTHR36508:SF1">
    <property type="entry name" value="PROTEIN SLYX"/>
    <property type="match status" value="1"/>
</dbReference>
<dbReference type="Pfam" id="PF04102">
    <property type="entry name" value="SlyX"/>
    <property type="match status" value="1"/>
</dbReference>
<evidence type="ECO:0000255" key="1">
    <source>
        <dbReference type="HAMAP-Rule" id="MF_00715"/>
    </source>
</evidence>
<evidence type="ECO:0000256" key="2">
    <source>
        <dbReference type="SAM" id="MobiDB-lite"/>
    </source>
</evidence>